<comment type="subcellular location">
    <subcellularLocation>
        <location evidence="1">Cytoplasm</location>
    </subcellularLocation>
</comment>
<comment type="similarity">
    <text evidence="1">Belongs to the TACO1 family.</text>
</comment>
<sequence length="234" mass="25310">MGAQWKVKHKEAAANAKGRTFGKLSKEIMIAARAGADPDMNSRLRLVVEQAKKASMPRETLERAIKKGAGLLGESVNFERLTYEGFAPHRVPVIVECLTDNINRTVSEIRVLFRKGQLGAAGSVSWDFLYQGMIEAVPAAADADPELAAIEAGAQDFESAEEGATLFLTESTDMDAVCKALPEFGFTVQSAQLGYRPKSTVDGLTEEQMAEVEAFLEAIDNHDDVQNVYVGLAG</sequence>
<feature type="chain" id="PRO_0000257104" description="Probable transcriptional regulatory protein PSPPH_2212">
    <location>
        <begin position="1"/>
        <end position="234"/>
    </location>
</feature>
<proteinExistence type="inferred from homology"/>
<protein>
    <recommendedName>
        <fullName evidence="1">Probable transcriptional regulatory protein PSPPH_2212</fullName>
    </recommendedName>
</protein>
<dbReference type="EMBL" id="CP000058">
    <property type="protein sequence ID" value="AAZ36760.1"/>
    <property type="molecule type" value="Genomic_DNA"/>
</dbReference>
<dbReference type="RefSeq" id="WP_002553245.1">
    <property type="nucleotide sequence ID" value="NC_005773.3"/>
</dbReference>
<dbReference type="SMR" id="Q48JK4"/>
<dbReference type="KEGG" id="psp:PSPPH_2212"/>
<dbReference type="eggNOG" id="COG0217">
    <property type="taxonomic scope" value="Bacteria"/>
</dbReference>
<dbReference type="HOGENOM" id="CLU_062974_2_2_6"/>
<dbReference type="Proteomes" id="UP000000551">
    <property type="component" value="Chromosome"/>
</dbReference>
<dbReference type="GO" id="GO:0005737">
    <property type="term" value="C:cytoplasm"/>
    <property type="evidence" value="ECO:0007669"/>
    <property type="project" value="UniProtKB-SubCell"/>
</dbReference>
<dbReference type="GO" id="GO:0003677">
    <property type="term" value="F:DNA binding"/>
    <property type="evidence" value="ECO:0007669"/>
    <property type="project" value="UniProtKB-UniRule"/>
</dbReference>
<dbReference type="GO" id="GO:0006355">
    <property type="term" value="P:regulation of DNA-templated transcription"/>
    <property type="evidence" value="ECO:0007669"/>
    <property type="project" value="UniProtKB-UniRule"/>
</dbReference>
<dbReference type="Gene3D" id="1.10.10.200">
    <property type="match status" value="1"/>
</dbReference>
<dbReference type="Gene3D" id="3.30.70.980">
    <property type="match status" value="2"/>
</dbReference>
<dbReference type="HAMAP" id="MF_00693">
    <property type="entry name" value="Transcrip_reg_TACO1"/>
    <property type="match status" value="1"/>
</dbReference>
<dbReference type="InterPro" id="IPR017856">
    <property type="entry name" value="Integrase-like_N"/>
</dbReference>
<dbReference type="InterPro" id="IPR048300">
    <property type="entry name" value="TACO1_YebC-like_2nd/3rd_dom"/>
</dbReference>
<dbReference type="InterPro" id="IPR049083">
    <property type="entry name" value="TACO1_YebC_N"/>
</dbReference>
<dbReference type="InterPro" id="IPR002876">
    <property type="entry name" value="Transcrip_reg_TACO1-like"/>
</dbReference>
<dbReference type="InterPro" id="IPR026564">
    <property type="entry name" value="Transcrip_reg_TACO1-like_dom3"/>
</dbReference>
<dbReference type="InterPro" id="IPR029072">
    <property type="entry name" value="YebC-like"/>
</dbReference>
<dbReference type="NCBIfam" id="NF009044">
    <property type="entry name" value="PRK12378.1"/>
    <property type="match status" value="1"/>
</dbReference>
<dbReference type="PANTHER" id="PTHR12532">
    <property type="entry name" value="TRANSLATIONAL ACTIVATOR OF CYTOCHROME C OXIDASE 1"/>
    <property type="match status" value="1"/>
</dbReference>
<dbReference type="PANTHER" id="PTHR12532:SF0">
    <property type="entry name" value="TRANSLATIONAL ACTIVATOR OF CYTOCHROME C OXIDASE 1"/>
    <property type="match status" value="1"/>
</dbReference>
<dbReference type="Pfam" id="PF20772">
    <property type="entry name" value="TACO1_YebC_N"/>
    <property type="match status" value="1"/>
</dbReference>
<dbReference type="Pfam" id="PF01709">
    <property type="entry name" value="Transcrip_reg"/>
    <property type="match status" value="1"/>
</dbReference>
<dbReference type="SUPFAM" id="SSF75625">
    <property type="entry name" value="YebC-like"/>
    <property type="match status" value="1"/>
</dbReference>
<name>Y2212_PSE14</name>
<accession>Q48JK4</accession>
<keyword id="KW-0963">Cytoplasm</keyword>
<keyword id="KW-0238">DNA-binding</keyword>
<keyword id="KW-0804">Transcription</keyword>
<keyword id="KW-0805">Transcription regulation</keyword>
<reference key="1">
    <citation type="journal article" date="2005" name="J. Bacteriol.">
        <title>Whole-genome sequence analysis of Pseudomonas syringae pv. phaseolicola 1448A reveals divergence among pathovars in genes involved in virulence and transposition.</title>
        <authorList>
            <person name="Joardar V."/>
            <person name="Lindeberg M."/>
            <person name="Jackson R.W."/>
            <person name="Selengut J."/>
            <person name="Dodson R."/>
            <person name="Brinkac L.M."/>
            <person name="Daugherty S.C."/>
            <person name="DeBoy R.T."/>
            <person name="Durkin A.S."/>
            <person name="Gwinn Giglio M."/>
            <person name="Madupu R."/>
            <person name="Nelson W.C."/>
            <person name="Rosovitz M.J."/>
            <person name="Sullivan S.A."/>
            <person name="Crabtree J."/>
            <person name="Creasy T."/>
            <person name="Davidsen T.M."/>
            <person name="Haft D.H."/>
            <person name="Zafar N."/>
            <person name="Zhou L."/>
            <person name="Halpin R."/>
            <person name="Holley T."/>
            <person name="Khouri H.M."/>
            <person name="Feldblyum T.V."/>
            <person name="White O."/>
            <person name="Fraser C.M."/>
            <person name="Chatterjee A.K."/>
            <person name="Cartinhour S."/>
            <person name="Schneider D."/>
            <person name="Mansfield J.W."/>
            <person name="Collmer A."/>
            <person name="Buell R."/>
        </authorList>
    </citation>
    <scope>NUCLEOTIDE SEQUENCE [LARGE SCALE GENOMIC DNA]</scope>
    <source>
        <strain>1448A / Race 6</strain>
    </source>
</reference>
<gene>
    <name type="ordered locus">PSPPH_2212</name>
</gene>
<evidence type="ECO:0000255" key="1">
    <source>
        <dbReference type="HAMAP-Rule" id="MF_00693"/>
    </source>
</evidence>
<organism>
    <name type="scientific">Pseudomonas savastanoi pv. phaseolicola (strain 1448A / Race 6)</name>
    <name type="common">Pseudomonas syringae pv. phaseolicola (strain 1448A / Race 6)</name>
    <dbReference type="NCBI Taxonomy" id="264730"/>
    <lineage>
        <taxon>Bacteria</taxon>
        <taxon>Pseudomonadati</taxon>
        <taxon>Pseudomonadota</taxon>
        <taxon>Gammaproteobacteria</taxon>
        <taxon>Pseudomonadales</taxon>
        <taxon>Pseudomonadaceae</taxon>
        <taxon>Pseudomonas</taxon>
    </lineage>
</organism>